<comment type="cofactor">
    <cofactor evidence="1">
        <name>FAD</name>
        <dbReference type="ChEBI" id="CHEBI:57692"/>
    </cofactor>
</comment>
<comment type="subcellular location">
    <subcellularLocation>
        <location evidence="1">Secreted</location>
        <location evidence="1">Cell wall</location>
    </subcellularLocation>
</comment>
<comment type="similarity">
    <text evidence="7">Belongs to the oxygen-dependent FAD-linked oxidoreductase family.</text>
</comment>
<sequence length="542" mass="61483">MGNSKPLPTISCISVFALYFSFYTITLTSSTSLQDDFIKCLYRNTNVRFTLDKTFFTPERNASIFTEVLESTAQNQRYLTKTMPKPGFIFKPVHESHVQASVICSKKLEIHFRVRSGGHDYEGVSYVSQIEKPFVLIDLSKLRQINVDIKDTSAWVEAGATVGELYYRIAEKSKFHGFPAGVYPSLGIGGHITGGAYGSLMRKYGLAADNVLDAKIVDANGKLLDRASMGEDLFWAIRGGSGGSFGIILSWKIKLVPVPETLTVFTVTKTFEQDRSFKILSKWQEIADNLVDELFLRVFFTVSGNKANKTVTMAYIGQFLGEKGTLMEVMKKDFPELGLTQKDCIEMSWIDSIIYNSGFPTNPPPPIEILLQAKSPIGKVYFKGKSDFAKKPIPVLGLEGMFKKLLEEDAALVIWTPYGGKMDKIPESEIPFPHRNGTNFMIQYYRSWSDSEKRPNRRTKWIRELYGYMTPYVSSNPRQAYVNYRDLDLGQNKDNSKSNFIEAKIWGANYFKDNFNRLVRIKSKVDPDNFFRHEQSIPTLPV</sequence>
<keyword id="KW-0134">Cell wall</keyword>
<keyword id="KW-1015">Disulfide bond</keyword>
<keyword id="KW-0274">FAD</keyword>
<keyword id="KW-0285">Flavoprotein</keyword>
<keyword id="KW-0325">Glycoprotein</keyword>
<keyword id="KW-0547">Nucleotide-binding</keyword>
<keyword id="KW-0560">Oxidoreductase</keyword>
<keyword id="KW-1185">Reference proteome</keyword>
<keyword id="KW-0964">Secreted</keyword>
<keyword id="KW-0732">Signal</keyword>
<proteinExistence type="evidence at transcript level"/>
<reference key="1">
    <citation type="journal article" date="1998" name="DNA Res.">
        <title>Structural analysis of Arabidopsis thaliana chromosome 5. V. Sequence features of the regions of 1,381,565 bp covered by twenty one physically assigned P1 and TAC clones.</title>
        <authorList>
            <person name="Kaneko T."/>
            <person name="Kotani H."/>
            <person name="Nakamura Y."/>
            <person name="Sato S."/>
            <person name="Asamizu E."/>
            <person name="Miyajima N."/>
            <person name="Tabata S."/>
        </authorList>
    </citation>
    <scope>NUCLEOTIDE SEQUENCE [LARGE SCALE GENOMIC DNA]</scope>
    <source>
        <strain>cv. Columbia</strain>
    </source>
</reference>
<reference key="2">
    <citation type="journal article" date="2017" name="Plant J.">
        <title>Araport11: a complete reannotation of the Arabidopsis thaliana reference genome.</title>
        <authorList>
            <person name="Cheng C.Y."/>
            <person name="Krishnakumar V."/>
            <person name="Chan A.P."/>
            <person name="Thibaud-Nissen F."/>
            <person name="Schobel S."/>
            <person name="Town C.D."/>
        </authorList>
    </citation>
    <scope>GENOME REANNOTATION</scope>
    <source>
        <strain>cv. Columbia</strain>
    </source>
</reference>
<reference key="3">
    <citation type="journal article" date="2003" name="Science">
        <title>Empirical analysis of transcriptional activity in the Arabidopsis genome.</title>
        <authorList>
            <person name="Yamada K."/>
            <person name="Lim J."/>
            <person name="Dale J.M."/>
            <person name="Chen H."/>
            <person name="Shinn P."/>
            <person name="Palm C.J."/>
            <person name="Southwick A.M."/>
            <person name="Wu H.C."/>
            <person name="Kim C.J."/>
            <person name="Nguyen M."/>
            <person name="Pham P.K."/>
            <person name="Cheuk R.F."/>
            <person name="Karlin-Newmann G."/>
            <person name="Liu S.X."/>
            <person name="Lam B."/>
            <person name="Sakano H."/>
            <person name="Wu T."/>
            <person name="Yu G."/>
            <person name="Miranda M."/>
            <person name="Quach H.L."/>
            <person name="Tripp M."/>
            <person name="Chang C.H."/>
            <person name="Lee J.M."/>
            <person name="Toriumi M.J."/>
            <person name="Chan M.M."/>
            <person name="Tang C.C."/>
            <person name="Onodera C.S."/>
            <person name="Deng J.M."/>
            <person name="Akiyama K."/>
            <person name="Ansari Y."/>
            <person name="Arakawa T."/>
            <person name="Banh J."/>
            <person name="Banno F."/>
            <person name="Bowser L."/>
            <person name="Brooks S.Y."/>
            <person name="Carninci P."/>
            <person name="Chao Q."/>
            <person name="Choy N."/>
            <person name="Enju A."/>
            <person name="Goldsmith A.D."/>
            <person name="Gurjal M."/>
            <person name="Hansen N.F."/>
            <person name="Hayashizaki Y."/>
            <person name="Johnson-Hopson C."/>
            <person name="Hsuan V.W."/>
            <person name="Iida K."/>
            <person name="Karnes M."/>
            <person name="Khan S."/>
            <person name="Koesema E."/>
            <person name="Ishida J."/>
            <person name="Jiang P.X."/>
            <person name="Jones T."/>
            <person name="Kawai J."/>
            <person name="Kamiya A."/>
            <person name="Meyers C."/>
            <person name="Nakajima M."/>
            <person name="Narusaka M."/>
            <person name="Seki M."/>
            <person name="Sakurai T."/>
            <person name="Satou M."/>
            <person name="Tamse R."/>
            <person name="Vaysberg M."/>
            <person name="Wallender E.K."/>
            <person name="Wong C."/>
            <person name="Yamamura Y."/>
            <person name="Yuan S."/>
            <person name="Shinozaki K."/>
            <person name="Davis R.W."/>
            <person name="Theologis A."/>
            <person name="Ecker J.R."/>
        </authorList>
    </citation>
    <scope>NUCLEOTIDE SEQUENCE [LARGE SCALE MRNA]</scope>
    <source>
        <strain>cv. Columbia</strain>
    </source>
</reference>
<reference key="4">
    <citation type="journal article" date="2015" name="J. Biol. Chem.">
        <title>Oxidation of monolignols by members of the berberine bridge enzyme family suggests a role in plant cell wall metabolism.</title>
        <authorList>
            <person name="Daniel B."/>
            <person name="Pavkov-Keller T."/>
            <person name="Steiner B."/>
            <person name="Dordic A."/>
            <person name="Gutmann A."/>
            <person name="Nidetzky B."/>
            <person name="Sensen C.W."/>
            <person name="van der Graaff E."/>
            <person name="Wallner S."/>
            <person name="Gruber K."/>
            <person name="Macheroux P."/>
        </authorList>
    </citation>
    <scope>GENE FAMILY</scope>
    <scope>NOMENCLATURE</scope>
</reference>
<accession>Q9FKU9</accession>
<accession>Q93Y11</accession>
<organism>
    <name type="scientific">Arabidopsis thaliana</name>
    <name type="common">Mouse-ear cress</name>
    <dbReference type="NCBI Taxonomy" id="3702"/>
    <lineage>
        <taxon>Eukaryota</taxon>
        <taxon>Viridiplantae</taxon>
        <taxon>Streptophyta</taxon>
        <taxon>Embryophyta</taxon>
        <taxon>Tracheophyta</taxon>
        <taxon>Spermatophyta</taxon>
        <taxon>Magnoliopsida</taxon>
        <taxon>eudicotyledons</taxon>
        <taxon>Gunneridae</taxon>
        <taxon>Pentapetalae</taxon>
        <taxon>rosids</taxon>
        <taxon>malvids</taxon>
        <taxon>Brassicales</taxon>
        <taxon>Brassicaceae</taxon>
        <taxon>Camelineae</taxon>
        <taxon>Arabidopsis</taxon>
    </lineage>
</organism>
<protein>
    <recommendedName>
        <fullName evidence="6">Berberine bridge enzyme-like 25</fullName>
        <shortName evidence="6">AtBBE-like 25</shortName>
        <ecNumber evidence="1">1.1.1.-</ecNumber>
    </recommendedName>
</protein>
<feature type="signal peptide" evidence="3">
    <location>
        <begin position="1"/>
        <end position="30"/>
    </location>
</feature>
<feature type="chain" id="PRO_0000438218" description="Berberine bridge enzyme-like 25">
    <location>
        <begin position="31"/>
        <end position="542"/>
    </location>
</feature>
<feature type="domain" description="FAD-binding PCMH-type" evidence="5">
    <location>
        <begin position="82"/>
        <end position="258"/>
    </location>
</feature>
<feature type="modified residue" description="Pros-8alpha-FAD histidine" evidence="2">
    <location>
        <position position="119"/>
    </location>
</feature>
<feature type="glycosylation site" description="N-linked (GlcNAc...) asparagine" evidence="4">
    <location>
        <position position="61"/>
    </location>
</feature>
<feature type="glycosylation site" description="N-linked (GlcNAc...) asparagine" evidence="4">
    <location>
        <position position="308"/>
    </location>
</feature>
<feature type="glycosylation site" description="N-linked (GlcNAc...) asparagine" evidence="4">
    <location>
        <position position="436"/>
    </location>
</feature>
<feature type="disulfide bond" evidence="1">
    <location>
        <begin position="40"/>
        <end position="104"/>
    </location>
</feature>
<feature type="sequence conflict" description="In Ref. 3; AAL24314/AAN15688." evidence="7" ref="3">
    <original>M</original>
    <variation>I</variation>
    <location>
        <position position="327"/>
    </location>
</feature>
<feature type="sequence conflict" description="In Ref. 3; AAL24314/AAN15688." evidence="7" ref="3">
    <original>I</original>
    <variation>V</variation>
    <location>
        <position position="505"/>
    </location>
</feature>
<name>BBE25_ARATH</name>
<dbReference type="EC" id="1.1.1.-" evidence="1"/>
<dbReference type="EMBL" id="AB011475">
    <property type="protein sequence ID" value="BAB10124.1"/>
    <property type="molecule type" value="Genomic_DNA"/>
</dbReference>
<dbReference type="EMBL" id="CP002688">
    <property type="protein sequence ID" value="AED95104.1"/>
    <property type="molecule type" value="Genomic_DNA"/>
</dbReference>
<dbReference type="EMBL" id="AY059832">
    <property type="protein sequence ID" value="AAL24314.1"/>
    <property type="molecule type" value="mRNA"/>
</dbReference>
<dbReference type="EMBL" id="BT000369">
    <property type="protein sequence ID" value="AAN15688.1"/>
    <property type="molecule type" value="mRNA"/>
</dbReference>
<dbReference type="RefSeq" id="NP_199252.1">
    <property type="nucleotide sequence ID" value="NM_123806.3"/>
</dbReference>
<dbReference type="SMR" id="Q9FKU9"/>
<dbReference type="FunCoup" id="Q9FKU9">
    <property type="interactions" value="27"/>
</dbReference>
<dbReference type="STRING" id="3702.Q9FKU9"/>
<dbReference type="GlyGen" id="Q9FKU9">
    <property type="glycosylation" value="3 sites"/>
</dbReference>
<dbReference type="PaxDb" id="3702-AT5G44390.1"/>
<dbReference type="ProteomicsDB" id="241203"/>
<dbReference type="EnsemblPlants" id="AT5G44390.1">
    <property type="protein sequence ID" value="AT5G44390.1"/>
    <property type="gene ID" value="AT5G44390"/>
</dbReference>
<dbReference type="GeneID" id="834465"/>
<dbReference type="Gramene" id="AT5G44390.1">
    <property type="protein sequence ID" value="AT5G44390.1"/>
    <property type="gene ID" value="AT5G44390"/>
</dbReference>
<dbReference type="KEGG" id="ath:AT5G44390"/>
<dbReference type="Araport" id="AT5G44390"/>
<dbReference type="TAIR" id="AT5G44390">
    <property type="gene designation" value="ATBBE25"/>
</dbReference>
<dbReference type="eggNOG" id="ENOG502QQWK">
    <property type="taxonomic scope" value="Eukaryota"/>
</dbReference>
<dbReference type="HOGENOM" id="CLU_018354_6_0_1"/>
<dbReference type="InParanoid" id="Q9FKU9"/>
<dbReference type="OMA" id="MAYIGQF"/>
<dbReference type="PhylomeDB" id="Q9FKU9"/>
<dbReference type="BioCyc" id="ARA:AT5G44390-MONOMER"/>
<dbReference type="PRO" id="PR:Q9FKU9"/>
<dbReference type="Proteomes" id="UP000006548">
    <property type="component" value="Chromosome 5"/>
</dbReference>
<dbReference type="ExpressionAtlas" id="Q9FKU9">
    <property type="expression patterns" value="baseline and differential"/>
</dbReference>
<dbReference type="GO" id="GO:0005576">
    <property type="term" value="C:extracellular region"/>
    <property type="evidence" value="ECO:0007669"/>
    <property type="project" value="UniProtKB-KW"/>
</dbReference>
<dbReference type="GO" id="GO:0009505">
    <property type="term" value="C:plant-type cell wall"/>
    <property type="evidence" value="ECO:0000250"/>
    <property type="project" value="UniProtKB"/>
</dbReference>
<dbReference type="GO" id="GO:0071949">
    <property type="term" value="F:FAD binding"/>
    <property type="evidence" value="ECO:0007669"/>
    <property type="project" value="InterPro"/>
</dbReference>
<dbReference type="GO" id="GO:0016491">
    <property type="term" value="F:oxidoreductase activity"/>
    <property type="evidence" value="ECO:0007669"/>
    <property type="project" value="UniProtKB-KW"/>
</dbReference>
<dbReference type="FunFam" id="3.30.43.10:FF:000004">
    <property type="entry name" value="Berberine bridge enzyme-like 15"/>
    <property type="match status" value="1"/>
</dbReference>
<dbReference type="Gene3D" id="3.30.465.10">
    <property type="match status" value="1"/>
</dbReference>
<dbReference type="Gene3D" id="3.40.462.20">
    <property type="match status" value="1"/>
</dbReference>
<dbReference type="Gene3D" id="3.30.43.10">
    <property type="entry name" value="Uridine Diphospho-n-acetylenolpyruvylglucosamine Reductase, domain 2"/>
    <property type="match status" value="1"/>
</dbReference>
<dbReference type="InterPro" id="IPR012951">
    <property type="entry name" value="BBE"/>
</dbReference>
<dbReference type="InterPro" id="IPR016166">
    <property type="entry name" value="FAD-bd_PCMH"/>
</dbReference>
<dbReference type="InterPro" id="IPR036318">
    <property type="entry name" value="FAD-bd_PCMH-like_sf"/>
</dbReference>
<dbReference type="InterPro" id="IPR016167">
    <property type="entry name" value="FAD-bd_PCMH_sub1"/>
</dbReference>
<dbReference type="InterPro" id="IPR016169">
    <property type="entry name" value="FAD-bd_PCMH_sub2"/>
</dbReference>
<dbReference type="InterPro" id="IPR006094">
    <property type="entry name" value="Oxid_FAD_bind_N"/>
</dbReference>
<dbReference type="PANTHER" id="PTHR32448">
    <property type="entry name" value="OS08G0158400 PROTEIN"/>
    <property type="match status" value="1"/>
</dbReference>
<dbReference type="Pfam" id="PF08031">
    <property type="entry name" value="BBE"/>
    <property type="match status" value="1"/>
</dbReference>
<dbReference type="Pfam" id="PF01565">
    <property type="entry name" value="FAD_binding_4"/>
    <property type="match status" value="1"/>
</dbReference>
<dbReference type="SUPFAM" id="SSF56176">
    <property type="entry name" value="FAD-binding/transporter-associated domain-like"/>
    <property type="match status" value="1"/>
</dbReference>
<dbReference type="PROSITE" id="PS51387">
    <property type="entry name" value="FAD_PCMH"/>
    <property type="match status" value="1"/>
</dbReference>
<evidence type="ECO:0000250" key="1">
    <source>
        <dbReference type="UniProtKB" id="O64743"/>
    </source>
</evidence>
<evidence type="ECO:0000250" key="2">
    <source>
        <dbReference type="UniProtKB" id="Q9FI21"/>
    </source>
</evidence>
<evidence type="ECO:0000255" key="3"/>
<evidence type="ECO:0000255" key="4">
    <source>
        <dbReference type="PROSITE-ProRule" id="PRU00498"/>
    </source>
</evidence>
<evidence type="ECO:0000255" key="5">
    <source>
        <dbReference type="PROSITE-ProRule" id="PRU00718"/>
    </source>
</evidence>
<evidence type="ECO:0000303" key="6">
    <source>
    </source>
</evidence>
<evidence type="ECO:0000305" key="7"/>
<evidence type="ECO:0000312" key="8">
    <source>
        <dbReference type="Araport" id="AT5G44390"/>
    </source>
</evidence>
<evidence type="ECO:0000312" key="9">
    <source>
        <dbReference type="EMBL" id="BAB10124.1"/>
    </source>
</evidence>
<gene>
    <name evidence="8" type="ordered locus">At5g44390</name>
    <name evidence="9" type="ORF">K9L2.19</name>
</gene>